<sequence length="717" mass="79476">MTSQPLRLAEEYGPSPGESELAVNPFDGLPFSSRYYELLKQRQALPIWAARFTFLEQLESNPTGVVLVSGEPGSGKSTQIPQWCAEFALARGFQKGQVTVTQPYPLAARSLALRVADEMDLTLGHEVGYSIPQEDCTGPNTLLRFCWDRLLLQEVASTRGTGAWGVLVLDEAQERSVASDSLQGLLQDARLEKLPGDLRVVVVTDPALEPKLRAFWGNPPIVHIPREPGERPSPIYWDTIPPDRVEAACQAVLELCRKELPGDVLVFLPSEEEISLCCESLSREVESLLLQGLPPRVLPLHPDCGRAVQAVYEDMDARKVVVTHWLADFSFSLPSIQHVIDSGLELRSVYNPRIRAEFQVLRPISKCQAEARRLRARGFPPGSCLCLYPKSFLELEAPPLPQPRVCEENLSSLVLLLKRRQIAEPGECHFLDQPAPEALMQALEDLDYLAALDDDGDLSDLGVILSEFPLAPELAKALLASCEFDCVDEMLTLAAMLTAAPGFTRPPLSAEEAALRRALEHTDGDHSSLIQVYEAFIQSGADEAWCQARGLNWAALCQAHKLRGELLELMQRIELPLSLPAFGSEQNRRDLQKALVSGYFLKVARDTDGTGNYLLLTHKHVAQLSSYCCYRSRRAPARPPPWVLYHNFTISKDNCLSIVSEIQPQMLVELAPPYFLSNLPPSESRDLLNQLREGMADSTAGSKSSSAQEFRDPCVLQ</sequence>
<comment type="function">
    <text evidence="8">Might be involved in RNA metabolism; it is missing helicase motif III and may not have helicase activity (PubMed:11353393).</text>
</comment>
<comment type="subcellular location">
    <subcellularLocation>
        <location evidence="1">Nucleus</location>
    </subcellularLocation>
</comment>
<comment type="alternative products">
    <event type="alternative splicing"/>
    <isoform>
        <id>Q8TE96-1</id>
        <name>1</name>
        <sequence type="displayed"/>
    </isoform>
    <isoform>
        <id>Q8TE96-2</id>
        <name>2</name>
        <sequence type="described" ref="VSP_024470"/>
    </isoform>
    <isoform>
        <id>Q8TE96-3</id>
        <name>3</name>
        <sequence type="described" ref="VSP_024471 VSP_024472"/>
    </isoform>
</comment>
<proteinExistence type="evidence at protein level"/>
<dbReference type="EMBL" id="AK074337">
    <property type="protein sequence ID" value="BAB85056.1"/>
    <property type="molecule type" value="mRNA"/>
</dbReference>
<dbReference type="EMBL" id="AK092420">
    <property type="status" value="NOT_ANNOTATED_CDS"/>
    <property type="molecule type" value="mRNA"/>
</dbReference>
<dbReference type="EMBL" id="AC005041">
    <property type="status" value="NOT_ANNOTATED_CDS"/>
    <property type="molecule type" value="Genomic_DNA"/>
</dbReference>
<dbReference type="EMBL" id="BC075018">
    <property type="protein sequence ID" value="AAH75018.1"/>
    <property type="molecule type" value="mRNA"/>
</dbReference>
<dbReference type="CCDS" id="CCDS1949.2">
    <molecule id="Q8TE96-1"/>
</dbReference>
<dbReference type="RefSeq" id="NP_598376.2">
    <molecule id="Q8TE96-1"/>
    <property type="nucleotide sequence ID" value="NM_133637.3"/>
</dbReference>
<dbReference type="RefSeq" id="XP_011530946.1">
    <property type="nucleotide sequence ID" value="XM_011532644.1"/>
</dbReference>
<dbReference type="RefSeq" id="XP_047299539.1">
    <molecule id="Q8TE96-2"/>
    <property type="nucleotide sequence ID" value="XM_047443583.1"/>
</dbReference>
<dbReference type="RefSeq" id="XP_054196855.1">
    <molecule id="Q8TE96-2"/>
    <property type="nucleotide sequence ID" value="XM_054340880.1"/>
</dbReference>
<dbReference type="SMR" id="Q8TE96"/>
<dbReference type="BioGRID" id="127915">
    <property type="interactions" value="29"/>
</dbReference>
<dbReference type="FunCoup" id="Q8TE96">
    <property type="interactions" value="20"/>
</dbReference>
<dbReference type="IntAct" id="Q8TE96">
    <property type="interactions" value="18"/>
</dbReference>
<dbReference type="MINT" id="Q8TE96"/>
<dbReference type="STRING" id="9606.ENSP00000384621"/>
<dbReference type="GlyGen" id="Q8TE96">
    <property type="glycosylation" value="1 site, 1 O-linked glycan (1 site)"/>
</dbReference>
<dbReference type="iPTMnet" id="Q8TE96"/>
<dbReference type="PhosphoSitePlus" id="Q8TE96"/>
<dbReference type="BioMuta" id="DQX1"/>
<dbReference type="DMDM" id="145558898"/>
<dbReference type="MassIVE" id="Q8TE96"/>
<dbReference type="PaxDb" id="9606-ENSP00000384621"/>
<dbReference type="PeptideAtlas" id="Q8TE96"/>
<dbReference type="ProteomicsDB" id="74424">
    <molecule id="Q8TE96-1"/>
</dbReference>
<dbReference type="ProteomicsDB" id="74425">
    <molecule id="Q8TE96-2"/>
</dbReference>
<dbReference type="ProteomicsDB" id="74426">
    <molecule id="Q8TE96-3"/>
</dbReference>
<dbReference type="Antibodypedia" id="47481">
    <property type="antibodies" value="130 antibodies from 25 providers"/>
</dbReference>
<dbReference type="DNASU" id="165545"/>
<dbReference type="Ensembl" id="ENST00000393951.6">
    <molecule id="Q8TE96-1"/>
    <property type="protein sequence ID" value="ENSP00000377523.2"/>
    <property type="gene ID" value="ENSG00000144045.14"/>
</dbReference>
<dbReference type="Ensembl" id="ENST00000404568.4">
    <molecule id="Q8TE96-1"/>
    <property type="protein sequence ID" value="ENSP00000384621.3"/>
    <property type="gene ID" value="ENSG00000144045.14"/>
</dbReference>
<dbReference type="GeneID" id="165545"/>
<dbReference type="KEGG" id="hsa:165545"/>
<dbReference type="MANE-Select" id="ENST00000404568.4">
    <property type="protein sequence ID" value="ENSP00000384621.3"/>
    <property type="RefSeq nucleotide sequence ID" value="NM_133637.3"/>
    <property type="RefSeq protein sequence ID" value="NP_598376.2"/>
</dbReference>
<dbReference type="UCSC" id="uc010yrw.3">
    <molecule id="Q8TE96-1"/>
    <property type="organism name" value="human"/>
</dbReference>
<dbReference type="AGR" id="HGNC:20410"/>
<dbReference type="CTD" id="165545"/>
<dbReference type="DisGeNET" id="165545"/>
<dbReference type="GeneCards" id="DQX1"/>
<dbReference type="HGNC" id="HGNC:20410">
    <property type="gene designation" value="DQX1"/>
</dbReference>
<dbReference type="HPA" id="ENSG00000144045">
    <property type="expression patterns" value="Tissue enriched (intestine)"/>
</dbReference>
<dbReference type="MIM" id="620580">
    <property type="type" value="gene"/>
</dbReference>
<dbReference type="neXtProt" id="NX_Q8TE96"/>
<dbReference type="OpenTargets" id="ENSG00000144045"/>
<dbReference type="PharmGKB" id="PA134916600"/>
<dbReference type="VEuPathDB" id="HostDB:ENSG00000144045"/>
<dbReference type="eggNOG" id="KOG0925">
    <property type="taxonomic scope" value="Eukaryota"/>
</dbReference>
<dbReference type="GeneTree" id="ENSGT00940000159579"/>
<dbReference type="HOGENOM" id="CLU_001832_5_7_1"/>
<dbReference type="InParanoid" id="Q8TE96"/>
<dbReference type="OMA" id="PPQWVLY"/>
<dbReference type="OrthoDB" id="10253254at2759"/>
<dbReference type="PAN-GO" id="Q8TE96">
    <property type="GO annotations" value="3 GO annotations based on evolutionary models"/>
</dbReference>
<dbReference type="PhylomeDB" id="Q8TE96"/>
<dbReference type="TreeFam" id="TF105735"/>
<dbReference type="PathwayCommons" id="Q8TE96"/>
<dbReference type="SignaLink" id="Q8TE96"/>
<dbReference type="BioGRID-ORCS" id="165545">
    <property type="hits" value="7 hits in 1151 CRISPR screens"/>
</dbReference>
<dbReference type="GenomeRNAi" id="165545"/>
<dbReference type="Pharos" id="Q8TE96">
    <property type="development level" value="Tdark"/>
</dbReference>
<dbReference type="PRO" id="PR:Q8TE96"/>
<dbReference type="Proteomes" id="UP000005640">
    <property type="component" value="Chromosome 2"/>
</dbReference>
<dbReference type="RNAct" id="Q8TE96">
    <property type="molecule type" value="protein"/>
</dbReference>
<dbReference type="Bgee" id="ENSG00000144045">
    <property type="expression patterns" value="Expressed in mucosa of transverse colon and 111 other cell types or tissues"/>
</dbReference>
<dbReference type="ExpressionAtlas" id="Q8TE96">
    <property type="expression patterns" value="baseline and differential"/>
</dbReference>
<dbReference type="GO" id="GO:0005681">
    <property type="term" value="C:spliceosomal complex"/>
    <property type="evidence" value="ECO:0000318"/>
    <property type="project" value="GO_Central"/>
</dbReference>
<dbReference type="GO" id="GO:0005524">
    <property type="term" value="F:ATP binding"/>
    <property type="evidence" value="ECO:0007669"/>
    <property type="project" value="UniProtKB-KW"/>
</dbReference>
<dbReference type="GO" id="GO:0016887">
    <property type="term" value="F:ATP hydrolysis activity"/>
    <property type="evidence" value="ECO:0007669"/>
    <property type="project" value="RHEA"/>
</dbReference>
<dbReference type="GO" id="GO:0004386">
    <property type="term" value="F:helicase activity"/>
    <property type="evidence" value="ECO:0000318"/>
    <property type="project" value="GO_Central"/>
</dbReference>
<dbReference type="GO" id="GO:0003723">
    <property type="term" value="F:RNA binding"/>
    <property type="evidence" value="ECO:0000318"/>
    <property type="project" value="GO_Central"/>
</dbReference>
<dbReference type="CDD" id="cd17986">
    <property type="entry name" value="DEXQc_DQX1"/>
    <property type="match status" value="1"/>
</dbReference>
<dbReference type="CDD" id="cd18791">
    <property type="entry name" value="SF2_C_RHA"/>
    <property type="match status" value="1"/>
</dbReference>
<dbReference type="FunFam" id="3.40.50.300:FF:001162">
    <property type="entry name" value="ATP-dependent RNA helicase DQX1"/>
    <property type="match status" value="1"/>
</dbReference>
<dbReference type="FunFam" id="1.20.120.1080:FF:000010">
    <property type="entry name" value="ATP-dependent RNA helicase DQX1 isoform X1"/>
    <property type="match status" value="1"/>
</dbReference>
<dbReference type="FunFam" id="3.40.50.300:FF:001049">
    <property type="entry name" value="ATP-dependent RNA helicase DQX1 isoform X1"/>
    <property type="match status" value="1"/>
</dbReference>
<dbReference type="Gene3D" id="1.20.120.1080">
    <property type="match status" value="1"/>
</dbReference>
<dbReference type="Gene3D" id="3.40.50.300">
    <property type="entry name" value="P-loop containing nucleotide triphosphate hydrolases"/>
    <property type="match status" value="2"/>
</dbReference>
<dbReference type="InterPro" id="IPR011709">
    <property type="entry name" value="DEAD-box_helicase_OB_fold"/>
</dbReference>
<dbReference type="InterPro" id="IPR048333">
    <property type="entry name" value="HA2_WH"/>
</dbReference>
<dbReference type="InterPro" id="IPR007502">
    <property type="entry name" value="Helicase-assoc_dom"/>
</dbReference>
<dbReference type="InterPro" id="IPR014001">
    <property type="entry name" value="Helicase_ATP-bd"/>
</dbReference>
<dbReference type="InterPro" id="IPR027417">
    <property type="entry name" value="P-loop_NTPase"/>
</dbReference>
<dbReference type="PANTHER" id="PTHR18934">
    <property type="entry name" value="ATP-DEPENDENT RNA HELICASE"/>
    <property type="match status" value="1"/>
</dbReference>
<dbReference type="PANTHER" id="PTHR18934:SF108">
    <property type="entry name" value="ATP-DEPENDENT RNA HELICASE DQX1"/>
    <property type="match status" value="1"/>
</dbReference>
<dbReference type="Pfam" id="PF21010">
    <property type="entry name" value="HA2_C"/>
    <property type="match status" value="1"/>
</dbReference>
<dbReference type="Pfam" id="PF04408">
    <property type="entry name" value="HA2_N"/>
    <property type="match status" value="1"/>
</dbReference>
<dbReference type="Pfam" id="PF07717">
    <property type="entry name" value="OB_NTP_bind"/>
    <property type="match status" value="1"/>
</dbReference>
<dbReference type="SMART" id="SM00487">
    <property type="entry name" value="DEXDc"/>
    <property type="match status" value="1"/>
</dbReference>
<dbReference type="SMART" id="SM00847">
    <property type="entry name" value="HA2"/>
    <property type="match status" value="1"/>
</dbReference>
<dbReference type="SUPFAM" id="SSF52540">
    <property type="entry name" value="P-loop containing nucleoside triphosphate hydrolases"/>
    <property type="match status" value="1"/>
</dbReference>
<dbReference type="PROSITE" id="PS51192">
    <property type="entry name" value="HELICASE_ATP_BIND_1"/>
    <property type="match status" value="1"/>
</dbReference>
<dbReference type="PROSITE" id="PS51194">
    <property type="entry name" value="HELICASE_CTER"/>
    <property type="match status" value="1"/>
</dbReference>
<reference key="1">
    <citation type="journal article" date="2001" name="Mamm. Genome">
        <title>DQX1, an RNA-dependent ATPase homolog with a novel DEAQ box: expression pattern and genomic sequence comparison of the human and mouse genes.</title>
        <authorList>
            <person name="Ji W."/>
            <person name="Chen F."/>
            <person name="Do T."/>
            <person name="Do A."/>
            <person name="Roe B.A."/>
            <person name="Meisler M.H."/>
        </authorList>
    </citation>
    <scope>NUCLEOTIDE SEQUENCE [MRNA] (ISOFORM 1)</scope>
    <scope>FUNCTION</scope>
    <scope>DISCUSSION OF SEQUENCE</scope>
</reference>
<reference key="2">
    <citation type="journal article" date="2004" name="Nat. Genet.">
        <title>Complete sequencing and characterization of 21,243 full-length human cDNAs.</title>
        <authorList>
            <person name="Ota T."/>
            <person name="Suzuki Y."/>
            <person name="Nishikawa T."/>
            <person name="Otsuki T."/>
            <person name="Sugiyama T."/>
            <person name="Irie R."/>
            <person name="Wakamatsu A."/>
            <person name="Hayashi K."/>
            <person name="Sato H."/>
            <person name="Nagai K."/>
            <person name="Kimura K."/>
            <person name="Makita H."/>
            <person name="Sekine M."/>
            <person name="Obayashi M."/>
            <person name="Nishi T."/>
            <person name="Shibahara T."/>
            <person name="Tanaka T."/>
            <person name="Ishii S."/>
            <person name="Yamamoto J."/>
            <person name="Saito K."/>
            <person name="Kawai Y."/>
            <person name="Isono Y."/>
            <person name="Nakamura Y."/>
            <person name="Nagahari K."/>
            <person name="Murakami K."/>
            <person name="Yasuda T."/>
            <person name="Iwayanagi T."/>
            <person name="Wagatsuma M."/>
            <person name="Shiratori A."/>
            <person name="Sudo H."/>
            <person name="Hosoiri T."/>
            <person name="Kaku Y."/>
            <person name="Kodaira H."/>
            <person name="Kondo H."/>
            <person name="Sugawara M."/>
            <person name="Takahashi M."/>
            <person name="Kanda K."/>
            <person name="Yokoi T."/>
            <person name="Furuya T."/>
            <person name="Kikkawa E."/>
            <person name="Omura Y."/>
            <person name="Abe K."/>
            <person name="Kamihara K."/>
            <person name="Katsuta N."/>
            <person name="Sato K."/>
            <person name="Tanikawa M."/>
            <person name="Yamazaki M."/>
            <person name="Ninomiya K."/>
            <person name="Ishibashi T."/>
            <person name="Yamashita H."/>
            <person name="Murakawa K."/>
            <person name="Fujimori K."/>
            <person name="Tanai H."/>
            <person name="Kimata M."/>
            <person name="Watanabe M."/>
            <person name="Hiraoka S."/>
            <person name="Chiba Y."/>
            <person name="Ishida S."/>
            <person name="Ono Y."/>
            <person name="Takiguchi S."/>
            <person name="Watanabe S."/>
            <person name="Yosida M."/>
            <person name="Hotuta T."/>
            <person name="Kusano J."/>
            <person name="Kanehori K."/>
            <person name="Takahashi-Fujii A."/>
            <person name="Hara H."/>
            <person name="Tanase T.-O."/>
            <person name="Nomura Y."/>
            <person name="Togiya S."/>
            <person name="Komai F."/>
            <person name="Hara R."/>
            <person name="Takeuchi K."/>
            <person name="Arita M."/>
            <person name="Imose N."/>
            <person name="Musashino K."/>
            <person name="Yuuki H."/>
            <person name="Oshima A."/>
            <person name="Sasaki N."/>
            <person name="Aotsuka S."/>
            <person name="Yoshikawa Y."/>
            <person name="Matsunawa H."/>
            <person name="Ichihara T."/>
            <person name="Shiohata N."/>
            <person name="Sano S."/>
            <person name="Moriya S."/>
            <person name="Momiyama H."/>
            <person name="Satoh N."/>
            <person name="Takami S."/>
            <person name="Terashima Y."/>
            <person name="Suzuki O."/>
            <person name="Nakagawa S."/>
            <person name="Senoh A."/>
            <person name="Mizoguchi H."/>
            <person name="Goto Y."/>
            <person name="Shimizu F."/>
            <person name="Wakebe H."/>
            <person name="Hishigaki H."/>
            <person name="Watanabe T."/>
            <person name="Sugiyama A."/>
            <person name="Takemoto M."/>
            <person name="Kawakami B."/>
            <person name="Yamazaki M."/>
            <person name="Watanabe K."/>
            <person name="Kumagai A."/>
            <person name="Itakura S."/>
            <person name="Fukuzumi Y."/>
            <person name="Fujimori Y."/>
            <person name="Komiyama M."/>
            <person name="Tashiro H."/>
            <person name="Tanigami A."/>
            <person name="Fujiwara T."/>
            <person name="Ono T."/>
            <person name="Yamada K."/>
            <person name="Fujii Y."/>
            <person name="Ozaki K."/>
            <person name="Hirao M."/>
            <person name="Ohmori Y."/>
            <person name="Kawabata A."/>
            <person name="Hikiji T."/>
            <person name="Kobatake N."/>
            <person name="Inagaki H."/>
            <person name="Ikema Y."/>
            <person name="Okamoto S."/>
            <person name="Okitani R."/>
            <person name="Kawakami T."/>
            <person name="Noguchi S."/>
            <person name="Itoh T."/>
            <person name="Shigeta K."/>
            <person name="Senba T."/>
            <person name="Matsumura K."/>
            <person name="Nakajima Y."/>
            <person name="Mizuno T."/>
            <person name="Morinaga M."/>
            <person name="Sasaki M."/>
            <person name="Togashi T."/>
            <person name="Oyama M."/>
            <person name="Hata H."/>
            <person name="Watanabe M."/>
            <person name="Komatsu T."/>
            <person name="Mizushima-Sugano J."/>
            <person name="Satoh T."/>
            <person name="Shirai Y."/>
            <person name="Takahashi Y."/>
            <person name="Nakagawa K."/>
            <person name="Okumura K."/>
            <person name="Nagase T."/>
            <person name="Nomura N."/>
            <person name="Kikuchi H."/>
            <person name="Masuho Y."/>
            <person name="Yamashita R."/>
            <person name="Nakai K."/>
            <person name="Yada T."/>
            <person name="Nakamura Y."/>
            <person name="Ohara O."/>
            <person name="Isogai T."/>
            <person name="Sugano S."/>
        </authorList>
    </citation>
    <scope>NUCLEOTIDE SEQUENCE [LARGE SCALE MRNA] (ISOFORMS 2 AND 3)</scope>
    <source>
        <tissue>Placenta</tissue>
    </source>
</reference>
<reference key="3">
    <citation type="journal article" date="2005" name="Nature">
        <title>Generation and annotation of the DNA sequences of human chromosomes 2 and 4.</title>
        <authorList>
            <person name="Hillier L.W."/>
            <person name="Graves T.A."/>
            <person name="Fulton R.S."/>
            <person name="Fulton L.A."/>
            <person name="Pepin K.H."/>
            <person name="Minx P."/>
            <person name="Wagner-McPherson C."/>
            <person name="Layman D."/>
            <person name="Wylie K."/>
            <person name="Sekhon M."/>
            <person name="Becker M.C."/>
            <person name="Fewell G.A."/>
            <person name="Delehaunty K.D."/>
            <person name="Miner T.L."/>
            <person name="Nash W.E."/>
            <person name="Kremitzki C."/>
            <person name="Oddy L."/>
            <person name="Du H."/>
            <person name="Sun H."/>
            <person name="Bradshaw-Cordum H."/>
            <person name="Ali J."/>
            <person name="Carter J."/>
            <person name="Cordes M."/>
            <person name="Harris A."/>
            <person name="Isak A."/>
            <person name="van Brunt A."/>
            <person name="Nguyen C."/>
            <person name="Du F."/>
            <person name="Courtney L."/>
            <person name="Kalicki J."/>
            <person name="Ozersky P."/>
            <person name="Abbott S."/>
            <person name="Armstrong J."/>
            <person name="Belter E.A."/>
            <person name="Caruso L."/>
            <person name="Cedroni M."/>
            <person name="Cotton M."/>
            <person name="Davidson T."/>
            <person name="Desai A."/>
            <person name="Elliott G."/>
            <person name="Erb T."/>
            <person name="Fronick C."/>
            <person name="Gaige T."/>
            <person name="Haakenson W."/>
            <person name="Haglund K."/>
            <person name="Holmes A."/>
            <person name="Harkins R."/>
            <person name="Kim K."/>
            <person name="Kruchowski S.S."/>
            <person name="Strong C.M."/>
            <person name="Grewal N."/>
            <person name="Goyea E."/>
            <person name="Hou S."/>
            <person name="Levy A."/>
            <person name="Martinka S."/>
            <person name="Mead K."/>
            <person name="McLellan M.D."/>
            <person name="Meyer R."/>
            <person name="Randall-Maher J."/>
            <person name="Tomlinson C."/>
            <person name="Dauphin-Kohlberg S."/>
            <person name="Kozlowicz-Reilly A."/>
            <person name="Shah N."/>
            <person name="Swearengen-Shahid S."/>
            <person name="Snider J."/>
            <person name="Strong J.T."/>
            <person name="Thompson J."/>
            <person name="Yoakum M."/>
            <person name="Leonard S."/>
            <person name="Pearman C."/>
            <person name="Trani L."/>
            <person name="Radionenko M."/>
            <person name="Waligorski J.E."/>
            <person name="Wang C."/>
            <person name="Rock S.M."/>
            <person name="Tin-Wollam A.-M."/>
            <person name="Maupin R."/>
            <person name="Latreille P."/>
            <person name="Wendl M.C."/>
            <person name="Yang S.-P."/>
            <person name="Pohl C."/>
            <person name="Wallis J.W."/>
            <person name="Spieth J."/>
            <person name="Bieri T.A."/>
            <person name="Berkowicz N."/>
            <person name="Nelson J.O."/>
            <person name="Osborne J."/>
            <person name="Ding L."/>
            <person name="Meyer R."/>
            <person name="Sabo A."/>
            <person name="Shotland Y."/>
            <person name="Sinha P."/>
            <person name="Wohldmann P.E."/>
            <person name="Cook L.L."/>
            <person name="Hickenbotham M.T."/>
            <person name="Eldred J."/>
            <person name="Williams D."/>
            <person name="Jones T.A."/>
            <person name="She X."/>
            <person name="Ciccarelli F.D."/>
            <person name="Izaurralde E."/>
            <person name="Taylor J."/>
            <person name="Schmutz J."/>
            <person name="Myers R.M."/>
            <person name="Cox D.R."/>
            <person name="Huang X."/>
            <person name="McPherson J.D."/>
            <person name="Mardis E.R."/>
            <person name="Clifton S.W."/>
            <person name="Warren W.C."/>
            <person name="Chinwalla A.T."/>
            <person name="Eddy S.R."/>
            <person name="Marra M.A."/>
            <person name="Ovcharenko I."/>
            <person name="Furey T.S."/>
            <person name="Miller W."/>
            <person name="Eichler E.E."/>
            <person name="Bork P."/>
            <person name="Suyama M."/>
            <person name="Torrents D."/>
            <person name="Waterston R.H."/>
            <person name="Wilson R.K."/>
        </authorList>
    </citation>
    <scope>NUCLEOTIDE SEQUENCE [LARGE SCALE GENOMIC DNA]</scope>
</reference>
<reference key="4">
    <citation type="journal article" date="2004" name="Genome Res.">
        <title>The status, quality, and expansion of the NIH full-length cDNA project: the Mammalian Gene Collection (MGC).</title>
        <authorList>
            <consortium name="The MGC Project Team"/>
        </authorList>
    </citation>
    <scope>NUCLEOTIDE SEQUENCE [LARGE SCALE MRNA] (ISOFORM 2)</scope>
</reference>
<accession>Q8TE96</accession>
<accession>Q6B017</accession>
<accession>Q8NAM8</accession>
<organism>
    <name type="scientific">Homo sapiens</name>
    <name type="common">Human</name>
    <dbReference type="NCBI Taxonomy" id="9606"/>
    <lineage>
        <taxon>Eukaryota</taxon>
        <taxon>Metazoa</taxon>
        <taxon>Chordata</taxon>
        <taxon>Craniata</taxon>
        <taxon>Vertebrata</taxon>
        <taxon>Euteleostomi</taxon>
        <taxon>Mammalia</taxon>
        <taxon>Eutheria</taxon>
        <taxon>Euarchontoglires</taxon>
        <taxon>Primates</taxon>
        <taxon>Haplorrhini</taxon>
        <taxon>Catarrhini</taxon>
        <taxon>Hominidae</taxon>
        <taxon>Homo</taxon>
    </lineage>
</organism>
<feature type="chain" id="PRO_0000284377" description="ATP-dependent RNA helicase homolog DQX1">
    <location>
        <begin position="1"/>
        <end position="717"/>
    </location>
</feature>
<feature type="domain" description="Helicase ATP-binding" evidence="2">
    <location>
        <begin position="57"/>
        <end position="225"/>
    </location>
</feature>
<feature type="domain" description="Helicase C-terminal" evidence="3">
    <location>
        <begin position="248"/>
        <end position="447"/>
    </location>
</feature>
<feature type="region of interest" description="Disordered" evidence="4">
    <location>
        <begin position="694"/>
        <end position="717"/>
    </location>
</feature>
<feature type="short sequence motif" description="DEAQ box" evidence="8">
    <location>
        <begin position="170"/>
        <end position="173"/>
    </location>
</feature>
<feature type="compositionally biased region" description="Polar residues" evidence="4">
    <location>
        <begin position="699"/>
        <end position="708"/>
    </location>
</feature>
<feature type="binding site" evidence="2">
    <location>
        <begin position="70"/>
        <end position="77"/>
    </location>
    <ligand>
        <name>ATP</name>
        <dbReference type="ChEBI" id="CHEBI:30616"/>
    </ligand>
</feature>
<feature type="splice variant" id="VSP_024470" description="In isoform 2." evidence="5 6">
    <location>
        <begin position="1"/>
        <end position="118"/>
    </location>
</feature>
<feature type="splice variant" id="VSP_024471" description="In isoform 3." evidence="5">
    <original>YNPRIRAE</original>
    <variation>SEREIAVG</variation>
    <location>
        <begin position="350"/>
        <end position="357"/>
    </location>
</feature>
<feature type="splice variant" id="VSP_024472" description="In isoform 3." evidence="5">
    <location>
        <begin position="358"/>
        <end position="717"/>
    </location>
</feature>
<feature type="sequence conflict" description="In Ref. 2; AK092420." evidence="7" ref="2">
    <original>N</original>
    <variation>S</variation>
    <location>
        <position position="61"/>
    </location>
</feature>
<feature type="sequence conflict" description="In Ref. 2; AK092420." evidence="7" ref="2">
    <original>H</original>
    <variation>R</variation>
    <location>
        <position position="125"/>
    </location>
</feature>
<feature type="sequence conflict" description="In Ref. 2; BAB85056." evidence="7" ref="2">
    <original>Y</original>
    <variation>S</variation>
    <location>
        <position position="129"/>
    </location>
</feature>
<feature type="sequence conflict" description="In Ref. 2; BAB85056." evidence="7" ref="2">
    <original>G</original>
    <variation>E</variation>
    <location>
        <position position="598"/>
    </location>
</feature>
<name>DQX1_HUMAN</name>
<protein>
    <recommendedName>
        <fullName>ATP-dependent RNA helicase homolog DQX1</fullName>
    </recommendedName>
    <alternativeName>
        <fullName>DEAQ box polypeptide 1</fullName>
    </alternativeName>
</protein>
<keyword id="KW-0025">Alternative splicing</keyword>
<keyword id="KW-0067">ATP-binding</keyword>
<keyword id="KW-0547">Nucleotide-binding</keyword>
<keyword id="KW-0539">Nucleus</keyword>
<keyword id="KW-1267">Proteomics identification</keyword>
<keyword id="KW-1185">Reference proteome</keyword>
<evidence type="ECO:0000250" key="1"/>
<evidence type="ECO:0000255" key="2">
    <source>
        <dbReference type="PROSITE-ProRule" id="PRU00541"/>
    </source>
</evidence>
<evidence type="ECO:0000255" key="3">
    <source>
        <dbReference type="PROSITE-ProRule" id="PRU00542"/>
    </source>
</evidence>
<evidence type="ECO:0000256" key="4">
    <source>
        <dbReference type="SAM" id="MobiDB-lite"/>
    </source>
</evidence>
<evidence type="ECO:0000303" key="5">
    <source>
    </source>
</evidence>
<evidence type="ECO:0000303" key="6">
    <source>
    </source>
</evidence>
<evidence type="ECO:0000305" key="7"/>
<evidence type="ECO:0000305" key="8">
    <source>
    </source>
</evidence>
<gene>
    <name type="primary">DQX1</name>
</gene>